<accession>Q8NKQ2</accession>
<accession>D4GVS9</accession>
<keyword id="KW-0010">Activator</keyword>
<keyword id="KW-0238">DNA-binding</keyword>
<keyword id="KW-1185">Reference proteome</keyword>
<keyword id="KW-0804">Transcription</keyword>
<keyword id="KW-0805">Transcription regulation</keyword>
<comment type="function">
    <text evidence="4">DNA-binding transcriptional regulator that functions as a regulator of central sugar catabolic pathways (PubMed:37387308). Is both a local regulator of specific steps in the pathways for D-glucose and D-fructose degradation and a global regulator of hexose catabolism (PubMed:37387308). In the presence of D-glucose, activates expression of the gene encoding the gluconate dehydratase (gad), which is involved in D-glucose catabolism via the semiphosphorylative Entner-Doudoroff (spED) pathway (PubMed:37387308). In the presence of D-fructose, activates expression of the genes encoding the PTS system EIIC component (ptfC) and the fructose-1,6-bisphosphate aldolase (fba), which are involved in D-fructose uptake and degradation via the modified Embden-Meyerhof pathway (PubMed:37387308). In addition, in the presence of D-glucose, D-fructose, D-galactose or glycerol, it activates expression of the genes encoding glyceraldehyde-3-phosphate dehydrogenase (gap) and pyruvate kinase (pykA), enzymes common to all four degradation pathways (PubMed:37387308). Acts by binding directly to the promoter region of the regulated genes (PubMed:37387308).</text>
</comment>
<comment type="activity regulation">
    <text evidence="4">Interaction with effectors modulates GfcR activity (PubMed:37387308). 2-keto-3-deoxy-6-phosphogluconate (KDPG), fructose-1,6-bisphosphate (FBP), 2-keto-3-deoxy-6-phosphogalactonate (KDPGal) and glycerol-3-phosphate (G3P), which are intermediates of sugar and glycerol degradation pathways, can act as inducer molecules (PubMed:37387308).</text>
</comment>
<comment type="domain">
    <text evidence="1 8">Contains an N-terminal DNA-binding winged helix-turn-helix domain and a C-terminal regulatory domain (or effector binding domain) resembling phosphoribosyltransferase (PRT) domain.</text>
</comment>
<comment type="disruption phenotype">
    <text evidence="3 4">Does not require uracil for growth, is partially resistant to 5-FOA (5-fluoroorotic acid) (PubMed:12533452). The deletion mutant loses its ability to grow on D-glucose, whereas growth on casamino acids is unaffected (PubMed:37387308). The mutant also loses the ability to grow on D-fructose, D-galactose and the non-sugar substrate glycerol (PubMed:37387308). Growth on the pentose sugar D-xylose is not affected (PubMed:37387308).</text>
</comment>
<comment type="similarity">
    <text evidence="1 7">Belongs to the purine/pyrimidine phosphoribosyltransferase family. GfcR subfamily.</text>
</comment>
<sequence length="210" mass="22299">MKNVDDLIASAAELADRGLSKGEIADELNVSRETASWLVERSGAATEPEPRAEPEGPDDIHVDWNAIGSGGKRLTYVGRALADLLMETNGEADVTVGIEKAGVPLATSVSRELETTLGAYSPAKHQWDEGDLEDLGGGFSRNFSPVEGRDCFIVDDTVTSGTTLRETIDAIRSEGGEPLACVVIVDKQGVEEIDGVPVHSLINVVRVGEQ</sequence>
<dbReference type="EMBL" id="AJ492197">
    <property type="protein sequence ID" value="CAD37329.1"/>
    <property type="molecule type" value="Genomic_DNA"/>
</dbReference>
<dbReference type="EMBL" id="CP001956">
    <property type="protein sequence ID" value="ADE04339.1"/>
    <property type="molecule type" value="Genomic_DNA"/>
</dbReference>
<dbReference type="RefSeq" id="WP_004043856.1">
    <property type="nucleotide sequence ID" value="NC_013967.1"/>
</dbReference>
<dbReference type="SMR" id="Q8NKQ2"/>
<dbReference type="STRING" id="309800.HVO_1082"/>
<dbReference type="PaxDb" id="309800-C498_13344"/>
<dbReference type="EnsemblBacteria" id="ADE04339">
    <property type="protein sequence ID" value="ADE04339"/>
    <property type="gene ID" value="HVO_1082"/>
</dbReference>
<dbReference type="GeneID" id="8926693"/>
<dbReference type="KEGG" id="hvo:HVO_1082"/>
<dbReference type="eggNOG" id="arCOG00028">
    <property type="taxonomic scope" value="Archaea"/>
</dbReference>
<dbReference type="HOGENOM" id="CLU_111001_0_0_2"/>
<dbReference type="OrthoDB" id="68893at2157"/>
<dbReference type="Proteomes" id="UP000008243">
    <property type="component" value="Chromosome"/>
</dbReference>
<dbReference type="GO" id="GO:0003677">
    <property type="term" value="F:DNA binding"/>
    <property type="evidence" value="ECO:0007669"/>
    <property type="project" value="UniProtKB-UniRule"/>
</dbReference>
<dbReference type="GO" id="GO:0004588">
    <property type="term" value="F:orotate phosphoribosyltransferase activity"/>
    <property type="evidence" value="ECO:0007669"/>
    <property type="project" value="TreeGrafter"/>
</dbReference>
<dbReference type="GO" id="GO:0019856">
    <property type="term" value="P:pyrimidine nucleobase biosynthetic process"/>
    <property type="evidence" value="ECO:0007669"/>
    <property type="project" value="TreeGrafter"/>
</dbReference>
<dbReference type="GO" id="GO:0010468">
    <property type="term" value="P:regulation of gene expression"/>
    <property type="evidence" value="ECO:0007669"/>
    <property type="project" value="UniProtKB-UniRule"/>
</dbReference>
<dbReference type="GO" id="GO:0006222">
    <property type="term" value="P:UMP biosynthetic process"/>
    <property type="evidence" value="ECO:0007669"/>
    <property type="project" value="TreeGrafter"/>
</dbReference>
<dbReference type="CDD" id="cd06223">
    <property type="entry name" value="PRTases_typeI"/>
    <property type="match status" value="1"/>
</dbReference>
<dbReference type="Gene3D" id="3.40.50.2020">
    <property type="match status" value="1"/>
</dbReference>
<dbReference type="Gene3D" id="1.10.10.60">
    <property type="entry name" value="Homeodomain-like"/>
    <property type="match status" value="1"/>
</dbReference>
<dbReference type="HAMAP" id="MF_01214">
    <property type="entry name" value="GfcR"/>
    <property type="match status" value="1"/>
</dbReference>
<dbReference type="InterPro" id="IPR053401">
    <property type="entry name" value="GcfR_halob"/>
</dbReference>
<dbReference type="InterPro" id="IPR022854">
    <property type="entry name" value="GfcR-like"/>
</dbReference>
<dbReference type="InterPro" id="IPR000836">
    <property type="entry name" value="PRibTrfase_dom"/>
</dbReference>
<dbReference type="InterPro" id="IPR029057">
    <property type="entry name" value="PRTase-like"/>
</dbReference>
<dbReference type="NCBIfam" id="NF002620">
    <property type="entry name" value="PRK02277.1"/>
    <property type="match status" value="1"/>
</dbReference>
<dbReference type="NCBIfam" id="NF045507">
    <property type="entry name" value="transregGfcR_Halo"/>
    <property type="match status" value="1"/>
</dbReference>
<dbReference type="PANTHER" id="PTHR19278">
    <property type="entry name" value="OROTATE PHOSPHORIBOSYLTRANSFERASE"/>
    <property type="match status" value="1"/>
</dbReference>
<dbReference type="PANTHER" id="PTHR19278:SF41">
    <property type="entry name" value="PYRE-LIKE PROTEIN"/>
    <property type="match status" value="1"/>
</dbReference>
<dbReference type="Pfam" id="PF00156">
    <property type="entry name" value="Pribosyltran"/>
    <property type="match status" value="1"/>
</dbReference>
<dbReference type="SUPFAM" id="SSF53271">
    <property type="entry name" value="PRTase-like"/>
    <property type="match status" value="1"/>
</dbReference>
<gene>
    <name evidence="6" type="primary">gfcR</name>
    <name evidence="5" type="synonym">pyrE1</name>
    <name evidence="9" type="ordered locus">HVO_1082</name>
</gene>
<organism>
    <name type="scientific">Haloferax volcanii (strain ATCC 29605 / DSM 3757 / JCM 8879 / NBRC 14742 / NCIMB 2012 / VKM B-1768 / DS2)</name>
    <name type="common">Halobacterium volcanii</name>
    <dbReference type="NCBI Taxonomy" id="309800"/>
    <lineage>
        <taxon>Archaea</taxon>
        <taxon>Methanobacteriati</taxon>
        <taxon>Methanobacteriota</taxon>
        <taxon>Stenosarchaea group</taxon>
        <taxon>Halobacteria</taxon>
        <taxon>Halobacteriales</taxon>
        <taxon>Haloferacaceae</taxon>
        <taxon>Haloferax</taxon>
    </lineage>
</organism>
<proteinExistence type="evidence at protein level"/>
<evidence type="ECO:0000255" key="1">
    <source>
        <dbReference type="HAMAP-Rule" id="MF_01214"/>
    </source>
</evidence>
<evidence type="ECO:0000256" key="2">
    <source>
        <dbReference type="SAM" id="MobiDB-lite"/>
    </source>
</evidence>
<evidence type="ECO:0000269" key="3">
    <source>
    </source>
</evidence>
<evidence type="ECO:0000269" key="4">
    <source>
    </source>
</evidence>
<evidence type="ECO:0000303" key="5">
    <source>
    </source>
</evidence>
<evidence type="ECO:0000303" key="6">
    <source>
    </source>
</evidence>
<evidence type="ECO:0000305" key="7"/>
<evidence type="ECO:0000305" key="8">
    <source>
    </source>
</evidence>
<evidence type="ECO:0000312" key="9">
    <source>
        <dbReference type="EMBL" id="ADE04339.1"/>
    </source>
</evidence>
<protein>
    <recommendedName>
        <fullName evidence="7">Transcriptional regulator GfcR</fullName>
    </recommendedName>
    <alternativeName>
        <fullName evidence="6">Glucose and fructose catabolism regulator</fullName>
    </alternativeName>
</protein>
<name>GFCR_HALVD</name>
<reference key="1">
    <citation type="journal article" date="2003" name="J. Bacteriol.">
        <title>Development of a gene knockout system for the halophilic archaeon Haloferax volcanii by use of the pyrE gene.</title>
        <authorList>
            <person name="Bitan-Banin G."/>
            <person name="Ortenberg R."/>
            <person name="Mevarech M."/>
        </authorList>
    </citation>
    <scope>NUCLEOTIDE SEQUENCE [GENOMIC DNA]</scope>
    <scope>DISRUPTION PHENOTYPE</scope>
    <source>
        <strain>DS2 / WR 340</strain>
    </source>
</reference>
<reference key="2">
    <citation type="journal article" date="2010" name="PLoS ONE">
        <title>The complete genome sequence of Haloferax volcanii DS2, a model archaeon.</title>
        <authorList>
            <person name="Hartman A.L."/>
            <person name="Norais C."/>
            <person name="Badger J.H."/>
            <person name="Delmas S."/>
            <person name="Haldenby S."/>
            <person name="Madupu R."/>
            <person name="Robinson J."/>
            <person name="Khouri H."/>
            <person name="Ren Q."/>
            <person name="Lowe T.M."/>
            <person name="Maupin-Furlow J."/>
            <person name="Pohlschroder M."/>
            <person name="Daniels C."/>
            <person name="Pfeiffer F."/>
            <person name="Allers T."/>
            <person name="Eisen J.A."/>
        </authorList>
    </citation>
    <scope>NUCLEOTIDE SEQUENCE [LARGE SCALE GENOMIC DNA]</scope>
    <source>
        <strain>ATCC 29605 / DSM 3757 / JCM 8879 / NBRC 14742 / NCIMB 2012 / VKM B-1768 / DS2</strain>
    </source>
</reference>
<reference key="3">
    <citation type="journal article" date="2023" name="Mol. Microbiol.">
        <title>Discovery of a novel transcriptional regulator of sugar catabolism in archaea.</title>
        <authorList>
            <person name="Johnsen U."/>
            <person name="Ortjohann M."/>
            <person name="Reinhardt A."/>
            <person name="Turner J.M."/>
            <person name="Stratton C."/>
            <person name="Weber K.R."/>
            <person name="Sanchez K.M."/>
            <person name="Maupin-Furlow J."/>
            <person name="Davies C."/>
            <person name="Schoenheit P."/>
        </authorList>
    </citation>
    <scope>FUNCTION</scope>
    <scope>DNA-BINDING</scope>
    <scope>ACTIVITY REGULATION</scope>
    <scope>DOMAIN</scope>
    <scope>DISRUPTION PHENOTYPE</scope>
    <source>
        <strain>H555</strain>
    </source>
</reference>
<feature type="chain" id="PRO_0000298894" description="Transcriptional regulator GfcR">
    <location>
        <begin position="1"/>
        <end position="210"/>
    </location>
</feature>
<feature type="region of interest" description="Disordered" evidence="2">
    <location>
        <begin position="39"/>
        <end position="60"/>
    </location>
</feature>
<feature type="compositionally biased region" description="Basic and acidic residues" evidence="2">
    <location>
        <begin position="48"/>
        <end position="60"/>
    </location>
</feature>